<accession>Q0IH24</accession>
<protein>
    <recommendedName>
        <fullName>Sperm flagellar protein 1</fullName>
    </recommendedName>
</protein>
<evidence type="ECO:0000250" key="1">
    <source>
        <dbReference type="UniProtKB" id="Q99JL1"/>
    </source>
</evidence>
<evidence type="ECO:0000255" key="2">
    <source>
        <dbReference type="PROSITE-ProRule" id="PRU00044"/>
    </source>
</evidence>
<evidence type="ECO:0000256" key="3">
    <source>
        <dbReference type="SAM" id="MobiDB-lite"/>
    </source>
</evidence>
<evidence type="ECO:0000269" key="4">
    <source>
    </source>
</evidence>
<evidence type="ECO:0000269" key="5">
    <source>
    </source>
</evidence>
<evidence type="ECO:0000269" key="6">
    <source>
    </source>
</evidence>
<evidence type="ECO:0000303" key="7">
    <source>
    </source>
</evidence>
<evidence type="ECO:0000305" key="8">
    <source>
    </source>
</evidence>
<feature type="chain" id="PRO_0000409220" description="Sperm flagellar protein 1">
    <location>
        <begin position="1"/>
        <end position="229"/>
    </location>
</feature>
<feature type="domain" description="Calponin-homology (CH)" evidence="2">
    <location>
        <begin position="7"/>
        <end position="115"/>
    </location>
</feature>
<feature type="region of interest" description="Disordered" evidence="3">
    <location>
        <begin position="122"/>
        <end position="169"/>
    </location>
</feature>
<feature type="region of interest" description="Essential for homodimerization and microtubule bundling activity" evidence="1">
    <location>
        <begin position="178"/>
        <end position="229"/>
    </location>
</feature>
<feature type="compositionally biased region" description="Polar residues" evidence="3">
    <location>
        <begin position="123"/>
        <end position="136"/>
    </location>
</feature>
<comment type="function">
    <text evidence="1 5 6">Microtubule-associated protein involved in the stabilization of microtubules along the axis of migration during radial intercalation. Promotes the establishment and stabilization of an axis of microtubules required for the active migration of cells into the outer epithelium (PubMed:25070955). Microtubule-associated protein that promotes microtubule bundling and stabilizes microtubules against depolymerization in response to cold shock (By similarity). Essential for ciliary central apparatus formation which requires both its microtubule-binding and bundling activities (By similarity). Regulates planar cell polarity signaling pathway and asymmetric microtubule accumulation in ciliated epithelia (PubMed:29514918).</text>
</comment>
<comment type="subunit">
    <text evidence="1">Homodimer.</text>
</comment>
<comment type="subcellular location">
    <subcellularLocation>
        <location evidence="4">Cytoplasm</location>
        <location evidence="4">Cytoskeleton</location>
        <location evidence="4">Cilium axoneme</location>
    </subcellularLocation>
    <subcellularLocation>
        <location evidence="6">Apical cell membrane</location>
    </subcellularLocation>
    <text evidence="4">Also found at the apical tip of cilia.</text>
</comment>
<comment type="domain">
    <text evidence="1">The Calponin-homology domain mediates its binding to microtubules.</text>
</comment>
<comment type="disruption phenotype">
    <text evidence="6">Morpholino knockdown of the protein at the four cell stage results in loss of planar cell polarity protein asymmetry, defects in cilia polarity and affects microtubule asymmetry.</text>
</comment>
<comment type="miscellaneous">
    <text evidence="8">Radial intercalation is a developmentally reiterated form of migration by which cells move in a direction orthogonal to the plane of the tissue from an inner layer to an outer layer.</text>
</comment>
<proteinExistence type="evidence at transcript level"/>
<keyword id="KW-1003">Cell membrane</keyword>
<keyword id="KW-0966">Cell projection</keyword>
<keyword id="KW-0969">Cilium</keyword>
<keyword id="KW-0970">Cilium biogenesis/degradation</keyword>
<keyword id="KW-0963">Cytoplasm</keyword>
<keyword id="KW-0206">Cytoskeleton</keyword>
<keyword id="KW-0472">Membrane</keyword>
<keyword id="KW-0493">Microtubule</keyword>
<keyword id="KW-1185">Reference proteome</keyword>
<name>SPEF1_XENLA</name>
<dbReference type="EMBL" id="BC123353">
    <property type="protein sequence ID" value="AAI23354.1"/>
    <property type="molecule type" value="mRNA"/>
</dbReference>
<dbReference type="RefSeq" id="NP_001090406.1">
    <property type="nucleotide sequence ID" value="NM_001096937.1"/>
</dbReference>
<dbReference type="SMR" id="Q0IH24"/>
<dbReference type="DNASU" id="779318"/>
<dbReference type="GeneID" id="779318"/>
<dbReference type="KEGG" id="xla:779318"/>
<dbReference type="AGR" id="Xenbase:XB-GENE-6252466"/>
<dbReference type="CTD" id="779318"/>
<dbReference type="Xenbase" id="XB-GENE-6252466">
    <property type="gene designation" value="spef1.S"/>
</dbReference>
<dbReference type="OrthoDB" id="193300at2759"/>
<dbReference type="Proteomes" id="UP000186698">
    <property type="component" value="Chromosome 1S"/>
</dbReference>
<dbReference type="Bgee" id="779318">
    <property type="expression patterns" value="Expressed in testis and 12 other cell types or tissues"/>
</dbReference>
<dbReference type="GO" id="GO:0097729">
    <property type="term" value="C:9+2 motile cilium"/>
    <property type="evidence" value="ECO:0000250"/>
    <property type="project" value="UniProtKB"/>
</dbReference>
<dbReference type="GO" id="GO:0016324">
    <property type="term" value="C:apical plasma membrane"/>
    <property type="evidence" value="ECO:0000314"/>
    <property type="project" value="UniProtKB"/>
</dbReference>
<dbReference type="GO" id="GO:1990716">
    <property type="term" value="C:axonemal central apparatus"/>
    <property type="evidence" value="ECO:0000250"/>
    <property type="project" value="UniProtKB"/>
</dbReference>
<dbReference type="GO" id="GO:0005930">
    <property type="term" value="C:axoneme"/>
    <property type="evidence" value="ECO:0000314"/>
    <property type="project" value="UniProtKB"/>
</dbReference>
<dbReference type="GO" id="GO:0016323">
    <property type="term" value="C:basolateral plasma membrane"/>
    <property type="evidence" value="ECO:0000250"/>
    <property type="project" value="UniProtKB"/>
</dbReference>
<dbReference type="GO" id="GO:0097542">
    <property type="term" value="C:ciliary tip"/>
    <property type="evidence" value="ECO:0000250"/>
    <property type="project" value="UniProtKB"/>
</dbReference>
<dbReference type="GO" id="GO:0030175">
    <property type="term" value="C:filopodium"/>
    <property type="evidence" value="ECO:0000250"/>
    <property type="project" value="UniProtKB"/>
</dbReference>
<dbReference type="GO" id="GO:0030027">
    <property type="term" value="C:lamellipodium"/>
    <property type="evidence" value="ECO:0000250"/>
    <property type="project" value="UniProtKB"/>
</dbReference>
<dbReference type="GO" id="GO:0005874">
    <property type="term" value="C:microtubule"/>
    <property type="evidence" value="ECO:0000250"/>
    <property type="project" value="UniProtKB"/>
</dbReference>
<dbReference type="GO" id="GO:0005902">
    <property type="term" value="C:microvillus"/>
    <property type="evidence" value="ECO:0000250"/>
    <property type="project" value="UniProtKB"/>
</dbReference>
<dbReference type="GO" id="GO:0008017">
    <property type="term" value="F:microtubule binding"/>
    <property type="evidence" value="ECO:0000314"/>
    <property type="project" value="UniProtKB"/>
</dbReference>
<dbReference type="GO" id="GO:1904158">
    <property type="term" value="P:axonemal central apparatus assembly"/>
    <property type="evidence" value="ECO:0000250"/>
    <property type="project" value="UniProtKB"/>
</dbReference>
<dbReference type="GO" id="GO:0016477">
    <property type="term" value="P:cell migration"/>
    <property type="evidence" value="ECO:0000314"/>
    <property type="project" value="UniProtKB"/>
</dbReference>
<dbReference type="GO" id="GO:0003341">
    <property type="term" value="P:cilium movement"/>
    <property type="evidence" value="ECO:0000250"/>
    <property type="project" value="UniProtKB"/>
</dbReference>
<dbReference type="GO" id="GO:0046847">
    <property type="term" value="P:filopodium assembly"/>
    <property type="evidence" value="ECO:0000250"/>
    <property type="project" value="UniProtKB"/>
</dbReference>
<dbReference type="GO" id="GO:0030032">
    <property type="term" value="P:lamellipodium assembly"/>
    <property type="evidence" value="ECO:0000250"/>
    <property type="project" value="UniProtKB"/>
</dbReference>
<dbReference type="GO" id="GO:0001578">
    <property type="term" value="P:microtubule bundle formation"/>
    <property type="evidence" value="ECO:0000250"/>
    <property type="project" value="UniProtKB"/>
</dbReference>
<dbReference type="GO" id="GO:0007026">
    <property type="term" value="P:negative regulation of microtubule depolymerization"/>
    <property type="evidence" value="ECO:0000250"/>
    <property type="project" value="UniProtKB"/>
</dbReference>
<dbReference type="GO" id="GO:0051493">
    <property type="term" value="P:regulation of cytoskeleton organization"/>
    <property type="evidence" value="ECO:0000318"/>
    <property type="project" value="GO_Central"/>
</dbReference>
<dbReference type="GO" id="GO:2000095">
    <property type="term" value="P:regulation of Wnt signaling pathway, planar cell polarity pathway"/>
    <property type="evidence" value="ECO:0000315"/>
    <property type="project" value="UniProtKB"/>
</dbReference>
<dbReference type="FunFam" id="1.10.418.10:FF:000060">
    <property type="entry name" value="Sperm flagellar protein 1"/>
    <property type="match status" value="1"/>
</dbReference>
<dbReference type="Gene3D" id="1.10.418.10">
    <property type="entry name" value="Calponin-like domain"/>
    <property type="match status" value="1"/>
</dbReference>
<dbReference type="InterPro" id="IPR010441">
    <property type="entry name" value="CH_2"/>
</dbReference>
<dbReference type="InterPro" id="IPR001715">
    <property type="entry name" value="CH_dom"/>
</dbReference>
<dbReference type="InterPro" id="IPR036872">
    <property type="entry name" value="CH_dom_sf"/>
</dbReference>
<dbReference type="InterPro" id="IPR052111">
    <property type="entry name" value="Spermatogenesis_Ciliary_MAP"/>
</dbReference>
<dbReference type="PANTHER" id="PTHR12509:SF9">
    <property type="entry name" value="SPERM FLAGELLAR PROTEIN 1 ISOFORM X1"/>
    <property type="match status" value="1"/>
</dbReference>
<dbReference type="PANTHER" id="PTHR12509">
    <property type="entry name" value="SPERMATOGENESIS-ASSOCIATED 4-RELATED"/>
    <property type="match status" value="1"/>
</dbReference>
<dbReference type="Pfam" id="PF06294">
    <property type="entry name" value="CH_2"/>
    <property type="match status" value="1"/>
</dbReference>
<dbReference type="SUPFAM" id="SSF47576">
    <property type="entry name" value="Calponin-homology domain, CH-domain"/>
    <property type="match status" value="1"/>
</dbReference>
<dbReference type="PROSITE" id="PS50021">
    <property type="entry name" value="CH"/>
    <property type="match status" value="1"/>
</dbReference>
<organism>
    <name type="scientific">Xenopus laevis</name>
    <name type="common">African clawed frog</name>
    <dbReference type="NCBI Taxonomy" id="8355"/>
    <lineage>
        <taxon>Eukaryota</taxon>
        <taxon>Metazoa</taxon>
        <taxon>Chordata</taxon>
        <taxon>Craniata</taxon>
        <taxon>Vertebrata</taxon>
        <taxon>Euteleostomi</taxon>
        <taxon>Amphibia</taxon>
        <taxon>Batrachia</taxon>
        <taxon>Anura</taxon>
        <taxon>Pipoidea</taxon>
        <taxon>Pipidae</taxon>
        <taxon>Xenopodinae</taxon>
        <taxon>Xenopus</taxon>
        <taxon>Xenopus</taxon>
    </lineage>
</organism>
<reference key="1">
    <citation type="submission" date="2006-09" db="EMBL/GenBank/DDBJ databases">
        <authorList>
            <consortium name="NIH - Xenopus Gene Collection (XGC) project"/>
        </authorList>
    </citation>
    <scope>NUCLEOTIDE SEQUENCE [LARGE SCALE MRNA]</scope>
    <source>
        <tissue>Ovary</tissue>
    </source>
</reference>
<reference key="2">
    <citation type="journal article" date="2009" name="Nat. Cell Biol.">
        <title>The planar cell polarity effector Fuz is essential for targeted membrane trafficking, ciliogenesis and mouse embryonic development.</title>
        <authorList>
            <person name="Gray R.S."/>
            <person name="Abitua P.B."/>
            <person name="Wlodarczyk B.J."/>
            <person name="Szabo-Rogers H.L."/>
            <person name="Blanchard O."/>
            <person name="Lee I."/>
            <person name="Weiss G.S."/>
            <person name="Liu K.J."/>
            <person name="Marcotte E.M."/>
            <person name="Wallingford J.B."/>
            <person name="Finnell R.H."/>
        </authorList>
    </citation>
    <scope>SUBCELLULAR LOCATION</scope>
</reference>
<reference key="3">
    <citation type="journal article" date="2014" name="J. Cell Biol.">
        <title>Radial intercalation is regulated by the Par complex and the microtubule-stabilizing protein CLAMP/Spef1.</title>
        <authorList>
            <person name="Werner M.E."/>
            <person name="Mitchell J.W."/>
            <person name="Putzbach W."/>
            <person name="Bacon E."/>
            <person name="Kim S.K."/>
            <person name="Mitchell B.J."/>
        </authorList>
    </citation>
    <scope>FUNCTION</scope>
</reference>
<reference key="4">
    <citation type="journal article" date="2018" name="J. Cell Biol.">
        <title>CLAMP/Spef1 regulates planar cell polarity signaling and asymmetric microtubule accumulation in the Xenopus ciliated epithelia.</title>
        <authorList>
            <person name="Kim S.K."/>
            <person name="Zhang S."/>
            <person name="Werner M.E."/>
            <person name="Brotslaw E.J."/>
            <person name="Mitchell J.W."/>
            <person name="Altabbaa M.M."/>
            <person name="Mitchell B.J."/>
        </authorList>
    </citation>
    <scope>FUNCTION</scope>
    <scope>SUBCELLULAR LOCATION</scope>
    <scope>DISRUPTION PHENOTYPE</scope>
</reference>
<sequence length="229" mass="26241">MAVEFDEETMQELYTWVDTIPLSRPKRNIARDFSDGVLTAELVKFYFPKLVEMHNYVPANSTTQKLSNWTILNRKVLSKLSFSVPDDVIRKIVQCSPGVVELVLNTLRQKIEEKQRLHHISADLSQDQATQNNGNTHSDKGYKSNGTELSPRQGARVDPASKTHQGYAQAANADTTLRFQLAEKEQTLILSQETIQILQAKLRRLEQLLLLKNVRIDDLTRRLQELEKK</sequence>
<gene>
    <name evidence="7" type="primary">spef1</name>
    <name evidence="7" type="synonym">clamp</name>
</gene>